<protein>
    <recommendedName>
        <fullName evidence="1">Undecaprenyl-diphosphatase</fullName>
        <ecNumber evidence="1">3.6.1.27</ecNumber>
    </recommendedName>
    <alternativeName>
        <fullName evidence="1">Bacitracin resistance protein</fullName>
    </alternativeName>
    <alternativeName>
        <fullName evidence="1">Undecaprenyl pyrophosphate phosphatase</fullName>
    </alternativeName>
</protein>
<reference key="1">
    <citation type="journal article" date="2008" name="Proc. Natl. Acad. Sci. U.S.A.">
        <title>Niche adaptation and genome expansion in the chlorophyll d-producing cyanobacterium Acaryochloris marina.</title>
        <authorList>
            <person name="Swingley W.D."/>
            <person name="Chen M."/>
            <person name="Cheung P.C."/>
            <person name="Conrad A.L."/>
            <person name="Dejesa L.C."/>
            <person name="Hao J."/>
            <person name="Honchak B.M."/>
            <person name="Karbach L.E."/>
            <person name="Kurdoglu A."/>
            <person name="Lahiri S."/>
            <person name="Mastrian S.D."/>
            <person name="Miyashita H."/>
            <person name="Page L."/>
            <person name="Ramakrishna P."/>
            <person name="Satoh S."/>
            <person name="Sattley W.M."/>
            <person name="Shimada Y."/>
            <person name="Taylor H.L."/>
            <person name="Tomo T."/>
            <person name="Tsuchiya T."/>
            <person name="Wang Z.T."/>
            <person name="Raymond J."/>
            <person name="Mimuro M."/>
            <person name="Blankenship R.E."/>
            <person name="Touchman J.W."/>
        </authorList>
    </citation>
    <scope>NUCLEOTIDE SEQUENCE [LARGE SCALE GENOMIC DNA]</scope>
    <source>
        <strain>MBIC 11017</strain>
    </source>
</reference>
<evidence type="ECO:0000255" key="1">
    <source>
        <dbReference type="HAMAP-Rule" id="MF_01006"/>
    </source>
</evidence>
<proteinExistence type="inferred from homology"/>
<organism>
    <name type="scientific">Acaryochloris marina (strain MBIC 11017)</name>
    <dbReference type="NCBI Taxonomy" id="329726"/>
    <lineage>
        <taxon>Bacteria</taxon>
        <taxon>Bacillati</taxon>
        <taxon>Cyanobacteriota</taxon>
        <taxon>Cyanophyceae</taxon>
        <taxon>Acaryochloridales</taxon>
        <taxon>Acaryochloridaceae</taxon>
        <taxon>Acaryochloris</taxon>
    </lineage>
</organism>
<gene>
    <name evidence="1" type="primary">uppP</name>
    <name type="ordered locus">AM1_1064</name>
</gene>
<feature type="chain" id="PRO_1000083972" description="Undecaprenyl-diphosphatase">
    <location>
        <begin position="1"/>
        <end position="266"/>
    </location>
</feature>
<feature type="transmembrane region" description="Helical" evidence="1">
    <location>
        <begin position="1"/>
        <end position="21"/>
    </location>
</feature>
<feature type="transmembrane region" description="Helical" evidence="1">
    <location>
        <begin position="40"/>
        <end position="60"/>
    </location>
</feature>
<feature type="transmembrane region" description="Helical" evidence="1">
    <location>
        <begin position="90"/>
        <end position="110"/>
    </location>
</feature>
<feature type="transmembrane region" description="Helical" evidence="1">
    <location>
        <begin position="113"/>
        <end position="133"/>
    </location>
</feature>
<feature type="transmembrane region" description="Helical" evidence="1">
    <location>
        <begin position="145"/>
        <end position="165"/>
    </location>
</feature>
<feature type="transmembrane region" description="Helical" evidence="1">
    <location>
        <begin position="188"/>
        <end position="208"/>
    </location>
</feature>
<feature type="transmembrane region" description="Helical" evidence="1">
    <location>
        <begin position="217"/>
        <end position="237"/>
    </location>
</feature>
<feature type="transmembrane region" description="Helical" evidence="1">
    <location>
        <begin position="245"/>
        <end position="265"/>
    </location>
</feature>
<name>UPPP_ACAM1</name>
<accession>B0C1T8</accession>
<keyword id="KW-0046">Antibiotic resistance</keyword>
<keyword id="KW-0997">Cell inner membrane</keyword>
<keyword id="KW-1003">Cell membrane</keyword>
<keyword id="KW-0133">Cell shape</keyword>
<keyword id="KW-0961">Cell wall biogenesis/degradation</keyword>
<keyword id="KW-0378">Hydrolase</keyword>
<keyword id="KW-0472">Membrane</keyword>
<keyword id="KW-0573">Peptidoglycan synthesis</keyword>
<keyword id="KW-1185">Reference proteome</keyword>
<keyword id="KW-0812">Transmembrane</keyword>
<keyword id="KW-1133">Transmembrane helix</keyword>
<comment type="function">
    <text evidence="1">Catalyzes the dephosphorylation of undecaprenyl diphosphate (UPP). Confers resistance to bacitracin.</text>
</comment>
<comment type="catalytic activity">
    <reaction evidence="1">
        <text>di-trans,octa-cis-undecaprenyl diphosphate + H2O = di-trans,octa-cis-undecaprenyl phosphate + phosphate + H(+)</text>
        <dbReference type="Rhea" id="RHEA:28094"/>
        <dbReference type="ChEBI" id="CHEBI:15377"/>
        <dbReference type="ChEBI" id="CHEBI:15378"/>
        <dbReference type="ChEBI" id="CHEBI:43474"/>
        <dbReference type="ChEBI" id="CHEBI:58405"/>
        <dbReference type="ChEBI" id="CHEBI:60392"/>
        <dbReference type="EC" id="3.6.1.27"/>
    </reaction>
</comment>
<comment type="subcellular location">
    <subcellularLocation>
        <location evidence="1">Cell inner membrane</location>
        <topology evidence="1">Multi-pass membrane protein</topology>
    </subcellularLocation>
</comment>
<comment type="miscellaneous">
    <text>Bacitracin is thought to be involved in the inhibition of peptidoglycan synthesis by sequestering undecaprenyl diphosphate, thereby reducing the pool of lipid carrier available.</text>
</comment>
<comment type="similarity">
    <text evidence="1">Belongs to the UppP family.</text>
</comment>
<sequence length="266" mass="28929">MTLLQAIILGIVQGLTEFLPVSSSGHLVLASYYLGWWEKLPLYVDIATNTGTFFAVLVVLRKDVWQALSGFFAGLTSSTARQQEGWRMALLVVLGSIPTAMIGLGLKPIFEELNQPLYVSFALIVTGLVLWFTPKSGLKRNAMSLSWLDATIGGIAQGCAVIPGISRSGSTISTMLWRGATSDLAPRFSFLMYLVVSFGVAILGIDEVREEGLQLAPLLGMIIASFVTGYIALLWLFSVLKKGQFKWFAPYLWVVAAITLIKVAMG</sequence>
<dbReference type="EC" id="3.6.1.27" evidence="1"/>
<dbReference type="EMBL" id="CP000828">
    <property type="protein sequence ID" value="ABW26104.1"/>
    <property type="molecule type" value="Genomic_DNA"/>
</dbReference>
<dbReference type="RefSeq" id="WP_012161661.1">
    <property type="nucleotide sequence ID" value="NC_009925.1"/>
</dbReference>
<dbReference type="SMR" id="B0C1T8"/>
<dbReference type="STRING" id="329726.AM1_1064"/>
<dbReference type="KEGG" id="amr:AM1_1064"/>
<dbReference type="eggNOG" id="COG1968">
    <property type="taxonomic scope" value="Bacteria"/>
</dbReference>
<dbReference type="HOGENOM" id="CLU_060296_1_2_3"/>
<dbReference type="OrthoDB" id="9808289at2"/>
<dbReference type="Proteomes" id="UP000000268">
    <property type="component" value="Chromosome"/>
</dbReference>
<dbReference type="GO" id="GO:0005886">
    <property type="term" value="C:plasma membrane"/>
    <property type="evidence" value="ECO:0007669"/>
    <property type="project" value="UniProtKB-SubCell"/>
</dbReference>
<dbReference type="GO" id="GO:0050380">
    <property type="term" value="F:undecaprenyl-diphosphatase activity"/>
    <property type="evidence" value="ECO:0007669"/>
    <property type="project" value="UniProtKB-UniRule"/>
</dbReference>
<dbReference type="GO" id="GO:0071555">
    <property type="term" value="P:cell wall organization"/>
    <property type="evidence" value="ECO:0007669"/>
    <property type="project" value="UniProtKB-KW"/>
</dbReference>
<dbReference type="GO" id="GO:0009252">
    <property type="term" value="P:peptidoglycan biosynthetic process"/>
    <property type="evidence" value="ECO:0007669"/>
    <property type="project" value="UniProtKB-KW"/>
</dbReference>
<dbReference type="GO" id="GO:0008360">
    <property type="term" value="P:regulation of cell shape"/>
    <property type="evidence" value="ECO:0007669"/>
    <property type="project" value="UniProtKB-KW"/>
</dbReference>
<dbReference type="GO" id="GO:0046677">
    <property type="term" value="P:response to antibiotic"/>
    <property type="evidence" value="ECO:0007669"/>
    <property type="project" value="UniProtKB-UniRule"/>
</dbReference>
<dbReference type="HAMAP" id="MF_01006">
    <property type="entry name" value="Undec_diphosphatase"/>
    <property type="match status" value="1"/>
</dbReference>
<dbReference type="InterPro" id="IPR003824">
    <property type="entry name" value="UppP"/>
</dbReference>
<dbReference type="PANTHER" id="PTHR30622">
    <property type="entry name" value="UNDECAPRENYL-DIPHOSPHATASE"/>
    <property type="match status" value="1"/>
</dbReference>
<dbReference type="PANTHER" id="PTHR30622:SF2">
    <property type="entry name" value="UNDECAPRENYL-DIPHOSPHATASE"/>
    <property type="match status" value="1"/>
</dbReference>
<dbReference type="Pfam" id="PF02673">
    <property type="entry name" value="BacA"/>
    <property type="match status" value="1"/>
</dbReference>